<protein>
    <recommendedName>
        <fullName evidence="1">Ribosomal RNA small subunit methyltransferase A</fullName>
        <ecNumber evidence="1">2.1.1.182</ecNumber>
    </recommendedName>
    <alternativeName>
        <fullName evidence="1">16S rRNA (adenine(1518)-N(6)/adenine(1519)-N(6))-dimethyltransferase</fullName>
    </alternativeName>
    <alternativeName>
        <fullName evidence="1">16S rRNA dimethyladenosine transferase</fullName>
    </alternativeName>
    <alternativeName>
        <fullName evidence="1">16S rRNA dimethylase</fullName>
    </alternativeName>
    <alternativeName>
        <fullName evidence="1">S-adenosylmethionine-6-N', N'-adenosyl(rRNA) dimethyltransferase</fullName>
    </alternativeName>
</protein>
<gene>
    <name evidence="1" type="primary">rsmA</name>
    <name evidence="1" type="synonym">ksgA</name>
    <name type="ordered locus">CbuG_1989</name>
</gene>
<evidence type="ECO:0000255" key="1">
    <source>
        <dbReference type="HAMAP-Rule" id="MF_00607"/>
    </source>
</evidence>
<accession>B6J3A6</accession>
<feature type="chain" id="PRO_1000130262" description="Ribosomal RNA small subunit methyltransferase A">
    <location>
        <begin position="1"/>
        <end position="258"/>
    </location>
</feature>
<feature type="binding site" evidence="1">
    <location>
        <position position="13"/>
    </location>
    <ligand>
        <name>S-adenosyl-L-methionine</name>
        <dbReference type="ChEBI" id="CHEBI:59789"/>
    </ligand>
</feature>
<feature type="binding site" evidence="1">
    <location>
        <position position="15"/>
    </location>
    <ligand>
        <name>S-adenosyl-L-methionine</name>
        <dbReference type="ChEBI" id="CHEBI:59789"/>
    </ligand>
</feature>
<feature type="binding site" evidence="1">
    <location>
        <position position="40"/>
    </location>
    <ligand>
        <name>S-adenosyl-L-methionine</name>
        <dbReference type="ChEBI" id="CHEBI:59789"/>
    </ligand>
</feature>
<feature type="binding site" evidence="1">
    <location>
        <position position="61"/>
    </location>
    <ligand>
        <name>S-adenosyl-L-methionine</name>
        <dbReference type="ChEBI" id="CHEBI:59789"/>
    </ligand>
</feature>
<feature type="binding site" evidence="1">
    <location>
        <position position="86"/>
    </location>
    <ligand>
        <name>S-adenosyl-L-methionine</name>
        <dbReference type="ChEBI" id="CHEBI:59789"/>
    </ligand>
</feature>
<feature type="binding site" evidence="1">
    <location>
        <position position="106"/>
    </location>
    <ligand>
        <name>S-adenosyl-L-methionine</name>
        <dbReference type="ChEBI" id="CHEBI:59789"/>
    </ligand>
</feature>
<sequence length="258" mass="29779">MKKMPMRKRFGQHFLHDSFVLQKIVSAIHPQKTDTLVEIGPGRGALTDYLLTECDNLALVEIDRDLVAFLQKKYNQQKNITIYQNDALQFDFSSVKTDKPLRVVGNLPYNISTPLLFHLFSQIHCIEDMHFMLQKEVVRRITAEVGSHDYGRLSVMAQYFCDNTYLFTVSPQAFTPPPRVESAIIRLIPRHNFTPVAKNLDQLSHVVKEAFSYRRKTVGNALKKLINPSQWPLLEINPQLRPQELTVEDFVKISNILN</sequence>
<proteinExistence type="inferred from homology"/>
<organism>
    <name type="scientific">Coxiella burnetii (strain CbuG_Q212)</name>
    <name type="common">Coxiella burnetii (strain Q212)</name>
    <dbReference type="NCBI Taxonomy" id="434923"/>
    <lineage>
        <taxon>Bacteria</taxon>
        <taxon>Pseudomonadati</taxon>
        <taxon>Pseudomonadota</taxon>
        <taxon>Gammaproteobacteria</taxon>
        <taxon>Legionellales</taxon>
        <taxon>Coxiellaceae</taxon>
        <taxon>Coxiella</taxon>
    </lineage>
</organism>
<keyword id="KW-0963">Cytoplasm</keyword>
<keyword id="KW-0489">Methyltransferase</keyword>
<keyword id="KW-0694">RNA-binding</keyword>
<keyword id="KW-0698">rRNA processing</keyword>
<keyword id="KW-0949">S-adenosyl-L-methionine</keyword>
<keyword id="KW-0808">Transferase</keyword>
<dbReference type="EC" id="2.1.1.182" evidence="1"/>
<dbReference type="EMBL" id="CP001019">
    <property type="protein sequence ID" value="ACJ19231.1"/>
    <property type="molecule type" value="Genomic_DNA"/>
</dbReference>
<dbReference type="RefSeq" id="WP_005772431.1">
    <property type="nucleotide sequence ID" value="NC_011527.1"/>
</dbReference>
<dbReference type="SMR" id="B6J3A6"/>
<dbReference type="KEGG" id="cbg:CbuG_1989"/>
<dbReference type="HOGENOM" id="CLU_041220_0_1_6"/>
<dbReference type="GO" id="GO:0005829">
    <property type="term" value="C:cytosol"/>
    <property type="evidence" value="ECO:0007669"/>
    <property type="project" value="TreeGrafter"/>
</dbReference>
<dbReference type="GO" id="GO:0052908">
    <property type="term" value="F:16S rRNA (adenine(1518)-N(6)/adenine(1519)-N(6))-dimethyltransferase activity"/>
    <property type="evidence" value="ECO:0007669"/>
    <property type="project" value="UniProtKB-EC"/>
</dbReference>
<dbReference type="GO" id="GO:0003723">
    <property type="term" value="F:RNA binding"/>
    <property type="evidence" value="ECO:0007669"/>
    <property type="project" value="UniProtKB-KW"/>
</dbReference>
<dbReference type="FunFam" id="1.10.8.100:FF:000003">
    <property type="entry name" value="Ribosomal RNA small subunit methyltransferase A"/>
    <property type="match status" value="1"/>
</dbReference>
<dbReference type="FunFam" id="3.40.50.150:FF:000006">
    <property type="entry name" value="Ribosomal RNA small subunit methyltransferase A"/>
    <property type="match status" value="1"/>
</dbReference>
<dbReference type="Gene3D" id="1.10.8.100">
    <property type="entry name" value="Ribosomal RNA adenine dimethylase-like, domain 2"/>
    <property type="match status" value="1"/>
</dbReference>
<dbReference type="Gene3D" id="3.40.50.150">
    <property type="entry name" value="Vaccinia Virus protein VP39"/>
    <property type="match status" value="1"/>
</dbReference>
<dbReference type="HAMAP" id="MF_00607">
    <property type="entry name" value="16SrRNA_methyltr_A"/>
    <property type="match status" value="1"/>
</dbReference>
<dbReference type="InterPro" id="IPR001737">
    <property type="entry name" value="KsgA/Erm"/>
</dbReference>
<dbReference type="InterPro" id="IPR023165">
    <property type="entry name" value="rRNA_Ade_diMease-like_C"/>
</dbReference>
<dbReference type="InterPro" id="IPR020596">
    <property type="entry name" value="rRNA_Ade_Mease_Trfase_CS"/>
</dbReference>
<dbReference type="InterPro" id="IPR020598">
    <property type="entry name" value="rRNA_Ade_methylase_Trfase_N"/>
</dbReference>
<dbReference type="InterPro" id="IPR011530">
    <property type="entry name" value="rRNA_adenine_dimethylase"/>
</dbReference>
<dbReference type="InterPro" id="IPR029063">
    <property type="entry name" value="SAM-dependent_MTases_sf"/>
</dbReference>
<dbReference type="NCBIfam" id="TIGR00755">
    <property type="entry name" value="ksgA"/>
    <property type="match status" value="1"/>
</dbReference>
<dbReference type="PANTHER" id="PTHR11727">
    <property type="entry name" value="DIMETHYLADENOSINE TRANSFERASE"/>
    <property type="match status" value="1"/>
</dbReference>
<dbReference type="PANTHER" id="PTHR11727:SF7">
    <property type="entry name" value="DIMETHYLADENOSINE TRANSFERASE-RELATED"/>
    <property type="match status" value="1"/>
</dbReference>
<dbReference type="Pfam" id="PF00398">
    <property type="entry name" value="RrnaAD"/>
    <property type="match status" value="1"/>
</dbReference>
<dbReference type="SMART" id="SM00650">
    <property type="entry name" value="rADc"/>
    <property type="match status" value="1"/>
</dbReference>
<dbReference type="SUPFAM" id="SSF53335">
    <property type="entry name" value="S-adenosyl-L-methionine-dependent methyltransferases"/>
    <property type="match status" value="1"/>
</dbReference>
<dbReference type="PROSITE" id="PS01131">
    <property type="entry name" value="RRNA_A_DIMETH"/>
    <property type="match status" value="1"/>
</dbReference>
<dbReference type="PROSITE" id="PS51689">
    <property type="entry name" value="SAM_RNA_A_N6_MT"/>
    <property type="match status" value="1"/>
</dbReference>
<name>RSMA_COXB2</name>
<comment type="function">
    <text evidence="1">Specifically dimethylates two adjacent adenosines (A1518 and A1519) in the loop of a conserved hairpin near the 3'-end of 16S rRNA in the 30S particle. May play a critical role in biogenesis of 30S subunits.</text>
</comment>
<comment type="catalytic activity">
    <reaction evidence="1">
        <text>adenosine(1518)/adenosine(1519) in 16S rRNA + 4 S-adenosyl-L-methionine = N(6)-dimethyladenosine(1518)/N(6)-dimethyladenosine(1519) in 16S rRNA + 4 S-adenosyl-L-homocysteine + 4 H(+)</text>
        <dbReference type="Rhea" id="RHEA:19609"/>
        <dbReference type="Rhea" id="RHEA-COMP:10232"/>
        <dbReference type="Rhea" id="RHEA-COMP:10233"/>
        <dbReference type="ChEBI" id="CHEBI:15378"/>
        <dbReference type="ChEBI" id="CHEBI:57856"/>
        <dbReference type="ChEBI" id="CHEBI:59789"/>
        <dbReference type="ChEBI" id="CHEBI:74411"/>
        <dbReference type="ChEBI" id="CHEBI:74493"/>
        <dbReference type="EC" id="2.1.1.182"/>
    </reaction>
</comment>
<comment type="subcellular location">
    <subcellularLocation>
        <location evidence="1">Cytoplasm</location>
    </subcellularLocation>
</comment>
<comment type="similarity">
    <text evidence="1">Belongs to the class I-like SAM-binding methyltransferase superfamily. rRNA adenine N(6)-methyltransferase family. RsmA subfamily.</text>
</comment>
<reference key="1">
    <citation type="journal article" date="2009" name="Infect. Immun.">
        <title>Comparative genomics reveal extensive transposon-mediated genomic plasticity and diversity among potential effector proteins within the genus Coxiella.</title>
        <authorList>
            <person name="Beare P.A."/>
            <person name="Unsworth N."/>
            <person name="Andoh M."/>
            <person name="Voth D.E."/>
            <person name="Omsland A."/>
            <person name="Gilk S.D."/>
            <person name="Williams K.P."/>
            <person name="Sobral B.W."/>
            <person name="Kupko J.J. III"/>
            <person name="Porcella S.F."/>
            <person name="Samuel J.E."/>
            <person name="Heinzen R.A."/>
        </authorList>
    </citation>
    <scope>NUCLEOTIDE SEQUENCE [LARGE SCALE GENOMIC DNA]</scope>
    <source>
        <strain>CbuG_Q212</strain>
    </source>
</reference>